<protein>
    <recommendedName>
        <fullName>Crooked neck-like protein 1</fullName>
    </recommendedName>
    <alternativeName>
        <fullName>Crooked neck homolog</fullName>
    </alternativeName>
    <alternativeName>
        <fullName>Crooked neck protein</fullName>
    </alternativeName>
</protein>
<proteinExistence type="evidence at transcript level"/>
<feature type="chain" id="PRO_0000205721" description="Crooked neck-like protein 1">
    <location>
        <begin position="1"/>
        <end position="690"/>
    </location>
</feature>
<feature type="repeat" description="HAT 1">
    <location>
        <begin position="61"/>
        <end position="93"/>
    </location>
</feature>
<feature type="repeat" description="HAT 2">
    <location>
        <begin position="95"/>
        <end position="127"/>
    </location>
</feature>
<feature type="repeat" description="HAT 3">
    <location>
        <begin position="129"/>
        <end position="161"/>
    </location>
</feature>
<feature type="repeat" description="HAT 4">
    <location>
        <begin position="163"/>
        <end position="194"/>
    </location>
</feature>
<feature type="repeat" description="HAT 5">
    <location>
        <begin position="196"/>
        <end position="227"/>
    </location>
</feature>
<feature type="repeat" description="HAT 6">
    <location>
        <begin position="229"/>
        <end position="264"/>
    </location>
</feature>
<feature type="repeat" description="HAT 7">
    <location>
        <begin position="266"/>
        <end position="300"/>
    </location>
</feature>
<feature type="repeat" description="HAT 8">
    <location>
        <begin position="310"/>
        <end position="342"/>
    </location>
</feature>
<feature type="repeat" description="HAT 9">
    <location>
        <begin position="344"/>
        <end position="378"/>
    </location>
</feature>
<feature type="repeat" description="HAT 10">
    <location>
        <begin position="388"/>
        <end position="424"/>
    </location>
</feature>
<feature type="repeat" description="HAT 11">
    <location>
        <begin position="459"/>
        <end position="491"/>
    </location>
</feature>
<feature type="repeat" description="HAT 12">
    <location>
        <begin position="493"/>
        <end position="527"/>
    </location>
</feature>
<feature type="repeat" description="HAT 13">
    <location>
        <begin position="529"/>
        <end position="560"/>
    </location>
</feature>
<feature type="repeat" description="HAT 14">
    <location>
        <begin position="565"/>
        <end position="606"/>
    </location>
</feature>
<feature type="repeat" description="HAT 15">
    <location>
        <begin position="608"/>
        <end position="646"/>
    </location>
</feature>
<feature type="repeat" description="HAT 16">
    <location>
        <begin position="648"/>
        <end position="673"/>
    </location>
</feature>
<feature type="region of interest" description="Mediates interaction with HSP90" evidence="1">
    <location>
        <begin position="250"/>
        <end position="467"/>
    </location>
</feature>
<feature type="region of interest" description="Disordered" evidence="4">
    <location>
        <begin position="667"/>
        <end position="690"/>
    </location>
</feature>
<feature type="short sequence motif" description="Nuclear localization signal" evidence="3">
    <location>
        <begin position="618"/>
        <end position="626"/>
    </location>
</feature>
<feature type="compositionally biased region" description="Basic and acidic residues" evidence="4">
    <location>
        <begin position="667"/>
        <end position="679"/>
    </location>
</feature>
<feature type="compositionally biased region" description="Acidic residues" evidence="4">
    <location>
        <begin position="680"/>
        <end position="690"/>
    </location>
</feature>
<feature type="modified residue" description="Phosphoserine" evidence="2">
    <location>
        <position position="342"/>
    </location>
</feature>
<feature type="modified residue" description="Phosphoserine" evidence="1">
    <location>
        <position position="689"/>
    </location>
</feature>
<dbReference type="EMBL" id="AF245018">
    <property type="protein sequence ID" value="AAK27972.1"/>
    <property type="molecule type" value="mRNA"/>
</dbReference>
<dbReference type="EMBL" id="BC085718">
    <property type="protein sequence ID" value="AAH85718.1"/>
    <property type="molecule type" value="mRNA"/>
</dbReference>
<dbReference type="RefSeq" id="NP_001316818.1">
    <property type="nucleotide sequence ID" value="NM_001329889.1"/>
</dbReference>
<dbReference type="RefSeq" id="NP_446249.1">
    <property type="nucleotide sequence ID" value="NM_053797.2"/>
</dbReference>
<dbReference type="SMR" id="P63155"/>
<dbReference type="FunCoup" id="P63155">
    <property type="interactions" value="4020"/>
</dbReference>
<dbReference type="IntAct" id="P63155">
    <property type="interactions" value="1"/>
</dbReference>
<dbReference type="STRING" id="10116.ENSRNOP00000014632"/>
<dbReference type="PhosphoSitePlus" id="P63155"/>
<dbReference type="PaxDb" id="10116-ENSRNOP00000014632"/>
<dbReference type="GeneID" id="100910202"/>
<dbReference type="KEGG" id="rno:100910202"/>
<dbReference type="UCSC" id="RGD:620507">
    <property type="organism name" value="rat"/>
</dbReference>
<dbReference type="AGR" id="RGD:620507"/>
<dbReference type="CTD" id="51340"/>
<dbReference type="RGD" id="620507">
    <property type="gene designation" value="Crnkl1"/>
</dbReference>
<dbReference type="VEuPathDB" id="HostDB:ENSRNOG00000010587"/>
<dbReference type="eggNOG" id="KOG1915">
    <property type="taxonomic scope" value="Eukaryota"/>
</dbReference>
<dbReference type="HOGENOM" id="CLU_011554_1_0_1"/>
<dbReference type="InParanoid" id="P63155"/>
<dbReference type="OrthoDB" id="37514at9989"/>
<dbReference type="PhylomeDB" id="P63155"/>
<dbReference type="TreeFam" id="TF300305"/>
<dbReference type="Reactome" id="R-RNO-72163">
    <property type="pathway name" value="mRNA Splicing - Major Pathway"/>
</dbReference>
<dbReference type="PRO" id="PR:P63155"/>
<dbReference type="Proteomes" id="UP000002494">
    <property type="component" value="Chromosome 3"/>
</dbReference>
<dbReference type="Bgee" id="ENSRNOG00000010587">
    <property type="expression patterns" value="Expressed in thymus and 19 other cell types or tissues"/>
</dbReference>
<dbReference type="GO" id="GO:0071013">
    <property type="term" value="C:catalytic step 2 spliceosome"/>
    <property type="evidence" value="ECO:0000266"/>
    <property type="project" value="RGD"/>
</dbReference>
<dbReference type="GO" id="GO:0016607">
    <property type="term" value="C:nuclear speck"/>
    <property type="evidence" value="ECO:0007669"/>
    <property type="project" value="UniProtKB-SubCell"/>
</dbReference>
<dbReference type="GO" id="GO:0005634">
    <property type="term" value="C:nucleus"/>
    <property type="evidence" value="ECO:0000250"/>
    <property type="project" value="UniProtKB"/>
</dbReference>
<dbReference type="GO" id="GO:0071014">
    <property type="term" value="C:post-mRNA release spliceosomal complex"/>
    <property type="evidence" value="ECO:0000318"/>
    <property type="project" value="GO_Central"/>
</dbReference>
<dbReference type="GO" id="GO:0000974">
    <property type="term" value="C:Prp19 complex"/>
    <property type="evidence" value="ECO:0000318"/>
    <property type="project" value="GO_Central"/>
</dbReference>
<dbReference type="GO" id="GO:0005681">
    <property type="term" value="C:spliceosomal complex"/>
    <property type="evidence" value="ECO:0000250"/>
    <property type="project" value="UniProtKB"/>
</dbReference>
<dbReference type="GO" id="GO:0071007">
    <property type="term" value="C:U2-type catalytic step 2 spliceosome"/>
    <property type="evidence" value="ECO:0000250"/>
    <property type="project" value="UniProtKB"/>
</dbReference>
<dbReference type="GO" id="GO:0003723">
    <property type="term" value="F:RNA binding"/>
    <property type="evidence" value="ECO:0000250"/>
    <property type="project" value="UniProtKB"/>
</dbReference>
<dbReference type="GO" id="GO:1990416">
    <property type="term" value="P:cellular response to brain-derived neurotrophic factor stimulus"/>
    <property type="evidence" value="ECO:0000270"/>
    <property type="project" value="RGD"/>
</dbReference>
<dbReference type="GO" id="GO:1990830">
    <property type="term" value="P:cellular response to leukemia inhibitory factor"/>
    <property type="evidence" value="ECO:0000270"/>
    <property type="project" value="RGD"/>
</dbReference>
<dbReference type="GO" id="GO:0021987">
    <property type="term" value="P:cerebral cortex development"/>
    <property type="evidence" value="ECO:0000270"/>
    <property type="project" value="RGD"/>
</dbReference>
<dbReference type="GO" id="GO:0000398">
    <property type="term" value="P:mRNA splicing, via spliceosome"/>
    <property type="evidence" value="ECO:0000250"/>
    <property type="project" value="UniProtKB"/>
</dbReference>
<dbReference type="GO" id="GO:0000245">
    <property type="term" value="P:spliceosomal complex assembly"/>
    <property type="evidence" value="ECO:0000250"/>
    <property type="project" value="UniProtKB"/>
</dbReference>
<dbReference type="FunFam" id="1.25.40.10:FF:000075">
    <property type="entry name" value="Crooked neck pre-mRNA-splicing factor 1"/>
    <property type="match status" value="1"/>
</dbReference>
<dbReference type="FunFam" id="1.25.40.10:FF:000117">
    <property type="entry name" value="Crooked neck pre-mRNA-splicing factor 1"/>
    <property type="match status" value="1"/>
</dbReference>
<dbReference type="FunFam" id="1.25.40.10:FF:000269">
    <property type="entry name" value="Crooked neck pre-mRNA-splicing factor 1"/>
    <property type="match status" value="1"/>
</dbReference>
<dbReference type="Gene3D" id="1.25.40.10">
    <property type="entry name" value="Tetratricopeptide repeat domain"/>
    <property type="match status" value="3"/>
</dbReference>
<dbReference type="InterPro" id="IPR003107">
    <property type="entry name" value="HAT"/>
</dbReference>
<dbReference type="InterPro" id="IPR055430">
    <property type="entry name" value="HAT_Syf1_CNRKL1_C"/>
</dbReference>
<dbReference type="InterPro" id="IPR045075">
    <property type="entry name" value="Syf1-like"/>
</dbReference>
<dbReference type="InterPro" id="IPR011990">
    <property type="entry name" value="TPR-like_helical_dom_sf"/>
</dbReference>
<dbReference type="PANTHER" id="PTHR11246:SF3">
    <property type="entry name" value="CROOKED NECK-LIKE PROTEIN 1"/>
    <property type="match status" value="1"/>
</dbReference>
<dbReference type="PANTHER" id="PTHR11246">
    <property type="entry name" value="PRE-MRNA SPLICING FACTOR"/>
    <property type="match status" value="1"/>
</dbReference>
<dbReference type="Pfam" id="PF23231">
    <property type="entry name" value="HAT_Syf1_CNRKL1_C"/>
    <property type="match status" value="2"/>
</dbReference>
<dbReference type="SMART" id="SM00386">
    <property type="entry name" value="HAT"/>
    <property type="match status" value="13"/>
</dbReference>
<dbReference type="SUPFAM" id="SSF48452">
    <property type="entry name" value="TPR-like"/>
    <property type="match status" value="2"/>
</dbReference>
<sequence length="690" mass="83416">MAASTAAGKQRIPKVAKVKNKAPAEVQITAEQLLREAKERELELLPPPPQQKITDEEELNDYKLRKRKTFEDNIRKNRTVISNWIKYAQWEESLKEIQRARSIYERALDVDYRNITLWLKYAEMEMKNRQVNHARNIWDRAITTLPRVNQFWYKYTYMEEMLGNVAGARQVFERWMEWQPEEQAWHSYINFELRYKEVERARTIYERFVLVHPAVKNWIKYARFEEKHAYFAHARKVYERAVEFFGDEHMDEHLYVAFAKFEENQKEFERVRVIYKYALDRISKQEAQELFKNYTIFEKKFGDRRGIEDIIVSKRRFQYEEEVKANPHNYDAWFDYLRLVESDAEADTVREVYERAIANVPPIQEKRHWKRYIYLWVNYALYEELEAKDPERTRQVYQASLELIPHKKFTFAKMWLYYAQFEIRQKNLPFARRALGTSIGKCPKNKLFKGYIELELQLREFDRCRKLYEKFLEFGPENCTSWIKFAELETILGDIERARAIYELAISQPRLDMPEVLWKSYIDFEIEQEETERTRNLYRQLLQRTQHVKVWISFAQFELSSGKEGSVAKCRQIYEEANKTMRNCEEKEERLMLLESWRSFEDEFGTVSDKERVDKLMPEKVKKRRKVQADDGSDAGWEEYYDYIFPEDAANQPNLKLLAMAKLWKKQQQEREAAEQDPDKDIDESESSSF</sequence>
<reference key="1">
    <citation type="journal article" date="2003" name="J. Biochem.">
        <title>A novel rat orthologue and homologue for the Drosophila crooked neck gene in neural stem cells and their immediate descendants.</title>
        <authorList>
            <person name="Amada N."/>
            <person name="Tezuka T."/>
            <person name="Mayeda A."/>
            <person name="Araki K."/>
            <person name="Takei N."/>
            <person name="Todokoro K."/>
            <person name="Nawa H."/>
        </authorList>
    </citation>
    <scope>NUCLEOTIDE SEQUENCE [MRNA]</scope>
    <scope>DEVELOPMENTAL STAGE</scope>
    <source>
        <strain>Sprague-Dawley</strain>
        <tissue>Embryonic brain</tissue>
    </source>
</reference>
<reference key="2">
    <citation type="journal article" date="2004" name="Genome Res.">
        <title>The status, quality, and expansion of the NIH full-length cDNA project: the Mammalian Gene Collection (MGC).</title>
        <authorList>
            <consortium name="The MGC Project Team"/>
        </authorList>
    </citation>
    <scope>NUCLEOTIDE SEQUENCE [LARGE SCALE MRNA]</scope>
    <source>
        <tissue>Heart</tissue>
    </source>
</reference>
<name>CRNL1_RAT</name>
<comment type="function">
    <text evidence="2">Involved in pre-mRNA splicing process. As a component of the minor spliceosome, involved in the splicing of U12-type introns in pre-mRNAs.</text>
</comment>
<comment type="subunit">
    <text evidence="2">Identified in the spliceosome C complex. Present in a spliceosome complex assembled in vitro containing CRNKL1, HPRP8BP and SNRPB2. Component of the minor spliceosome, which splices U12-type introns (By similarity). Interacts with PPIL2 (via the PPIase cyclophilin-type domain); they may form a trimeric complex with HSP90.</text>
</comment>
<comment type="subcellular location">
    <subcellularLocation>
        <location evidence="2">Nucleus</location>
    </subcellularLocation>
    <subcellularLocation>
        <location evidence="2">Nucleus speckle</location>
    </subcellularLocation>
    <text evidence="2">Colocalizes with core spliceosomal snRNP proteins.</text>
</comment>
<comment type="developmental stage">
    <text evidence="5">Highly expressed in embryonic brain but its expression decrease during development.</text>
</comment>
<comment type="similarity">
    <text evidence="6">Belongs to the crooked-neck family.</text>
</comment>
<gene>
    <name type="primary">Crnkl1</name>
    <name type="synonym">Crn</name>
</gene>
<evidence type="ECO:0000250" key="1">
    <source>
        <dbReference type="UniProtKB" id="P63154"/>
    </source>
</evidence>
<evidence type="ECO:0000250" key="2">
    <source>
        <dbReference type="UniProtKB" id="Q9BZJ0"/>
    </source>
</evidence>
<evidence type="ECO:0000255" key="3"/>
<evidence type="ECO:0000256" key="4">
    <source>
        <dbReference type="SAM" id="MobiDB-lite"/>
    </source>
</evidence>
<evidence type="ECO:0000269" key="5">
    <source>
    </source>
</evidence>
<evidence type="ECO:0000305" key="6"/>
<accession>P63155</accession>
<accession>Q9CQC1</accession>
<keyword id="KW-0507">mRNA processing</keyword>
<keyword id="KW-0508">mRNA splicing</keyword>
<keyword id="KW-0539">Nucleus</keyword>
<keyword id="KW-0597">Phosphoprotein</keyword>
<keyword id="KW-1185">Reference proteome</keyword>
<keyword id="KW-0677">Repeat</keyword>
<keyword id="KW-0747">Spliceosome</keyword>
<organism>
    <name type="scientific">Rattus norvegicus</name>
    <name type="common">Rat</name>
    <dbReference type="NCBI Taxonomy" id="10116"/>
    <lineage>
        <taxon>Eukaryota</taxon>
        <taxon>Metazoa</taxon>
        <taxon>Chordata</taxon>
        <taxon>Craniata</taxon>
        <taxon>Vertebrata</taxon>
        <taxon>Euteleostomi</taxon>
        <taxon>Mammalia</taxon>
        <taxon>Eutheria</taxon>
        <taxon>Euarchontoglires</taxon>
        <taxon>Glires</taxon>
        <taxon>Rodentia</taxon>
        <taxon>Myomorpha</taxon>
        <taxon>Muroidea</taxon>
        <taxon>Muridae</taxon>
        <taxon>Murinae</taxon>
        <taxon>Rattus</taxon>
    </lineage>
</organism>